<name>YQGF_CAMJR</name>
<feature type="chain" id="PRO_0000172040" description="Putative pre-16S rRNA nuclease">
    <location>
        <begin position="1"/>
        <end position="127"/>
    </location>
</feature>
<gene>
    <name type="ordered locus">CJE0738</name>
</gene>
<accession>Q5HVD6</accession>
<comment type="function">
    <text evidence="1">Could be a nuclease involved in processing of the 5'-end of pre-16S rRNA.</text>
</comment>
<comment type="subcellular location">
    <subcellularLocation>
        <location evidence="1">Cytoplasm</location>
    </subcellularLocation>
</comment>
<comment type="similarity">
    <text evidence="1">Belongs to the YqgF nuclease family.</text>
</comment>
<proteinExistence type="inferred from homology"/>
<dbReference type="EC" id="3.1.-.-" evidence="1"/>
<dbReference type="EMBL" id="CP000025">
    <property type="protein sequence ID" value="AAW34531.1"/>
    <property type="molecule type" value="Genomic_DNA"/>
</dbReference>
<dbReference type="SMR" id="Q5HVD6"/>
<dbReference type="KEGG" id="cjr:CJE0738"/>
<dbReference type="HOGENOM" id="CLU_098240_2_2_7"/>
<dbReference type="GO" id="GO:0005829">
    <property type="term" value="C:cytosol"/>
    <property type="evidence" value="ECO:0007669"/>
    <property type="project" value="TreeGrafter"/>
</dbReference>
<dbReference type="GO" id="GO:0004518">
    <property type="term" value="F:nuclease activity"/>
    <property type="evidence" value="ECO:0007669"/>
    <property type="project" value="UniProtKB-KW"/>
</dbReference>
<dbReference type="GO" id="GO:0000967">
    <property type="term" value="P:rRNA 5'-end processing"/>
    <property type="evidence" value="ECO:0007669"/>
    <property type="project" value="UniProtKB-UniRule"/>
</dbReference>
<dbReference type="CDD" id="cd16964">
    <property type="entry name" value="YqgF"/>
    <property type="match status" value="1"/>
</dbReference>
<dbReference type="Gene3D" id="3.30.420.140">
    <property type="entry name" value="YqgF/RNase H-like domain"/>
    <property type="match status" value="1"/>
</dbReference>
<dbReference type="HAMAP" id="MF_00651">
    <property type="entry name" value="Nuclease_YqgF"/>
    <property type="match status" value="1"/>
</dbReference>
<dbReference type="InterPro" id="IPR012337">
    <property type="entry name" value="RNaseH-like_sf"/>
</dbReference>
<dbReference type="InterPro" id="IPR005227">
    <property type="entry name" value="YqgF"/>
</dbReference>
<dbReference type="InterPro" id="IPR006641">
    <property type="entry name" value="YqgF/RNaseH-like_dom"/>
</dbReference>
<dbReference type="InterPro" id="IPR037027">
    <property type="entry name" value="YqgF/RNaseH-like_dom_sf"/>
</dbReference>
<dbReference type="NCBIfam" id="NF001026">
    <property type="entry name" value="PRK00109.2-2"/>
    <property type="match status" value="1"/>
</dbReference>
<dbReference type="NCBIfam" id="TIGR00250">
    <property type="entry name" value="RNAse_H_YqgF"/>
    <property type="match status" value="1"/>
</dbReference>
<dbReference type="PANTHER" id="PTHR33317">
    <property type="entry name" value="POLYNUCLEOTIDYL TRANSFERASE, RIBONUCLEASE H-LIKE SUPERFAMILY PROTEIN"/>
    <property type="match status" value="1"/>
</dbReference>
<dbReference type="PANTHER" id="PTHR33317:SF4">
    <property type="entry name" value="POLYNUCLEOTIDYL TRANSFERASE, RIBONUCLEASE H-LIKE SUPERFAMILY PROTEIN"/>
    <property type="match status" value="1"/>
</dbReference>
<dbReference type="Pfam" id="PF03652">
    <property type="entry name" value="RuvX"/>
    <property type="match status" value="1"/>
</dbReference>
<dbReference type="SMART" id="SM00732">
    <property type="entry name" value="YqgFc"/>
    <property type="match status" value="1"/>
</dbReference>
<dbReference type="SUPFAM" id="SSF53098">
    <property type="entry name" value="Ribonuclease H-like"/>
    <property type="match status" value="1"/>
</dbReference>
<organism>
    <name type="scientific">Campylobacter jejuni (strain RM1221)</name>
    <dbReference type="NCBI Taxonomy" id="195099"/>
    <lineage>
        <taxon>Bacteria</taxon>
        <taxon>Pseudomonadati</taxon>
        <taxon>Campylobacterota</taxon>
        <taxon>Epsilonproteobacteria</taxon>
        <taxon>Campylobacterales</taxon>
        <taxon>Campylobacteraceae</taxon>
        <taxon>Campylobacter</taxon>
    </lineage>
</organism>
<protein>
    <recommendedName>
        <fullName evidence="1">Putative pre-16S rRNA nuclease</fullName>
        <ecNumber evidence="1">3.1.-.-</ecNumber>
    </recommendedName>
</protein>
<sequence>MRALALDVGLKRIGVALCIDKKIALPLDAVLRKNRNQAANEIKNLLKIHEISLLIVGIPKGGSSEEEMTRRIKHFVSLLEFDKEICFVDESGTSKEALGYGVANTRKKDGKLDSLSAFIMIKDYFAL</sequence>
<keyword id="KW-0963">Cytoplasm</keyword>
<keyword id="KW-0378">Hydrolase</keyword>
<keyword id="KW-0540">Nuclease</keyword>
<keyword id="KW-0690">Ribosome biogenesis</keyword>
<evidence type="ECO:0000255" key="1">
    <source>
        <dbReference type="HAMAP-Rule" id="MF_00651"/>
    </source>
</evidence>
<reference key="1">
    <citation type="journal article" date="2005" name="PLoS Biol.">
        <title>Major structural differences and novel potential virulence mechanisms from the genomes of multiple Campylobacter species.</title>
        <authorList>
            <person name="Fouts D.E."/>
            <person name="Mongodin E.F."/>
            <person name="Mandrell R.E."/>
            <person name="Miller W.G."/>
            <person name="Rasko D.A."/>
            <person name="Ravel J."/>
            <person name="Brinkac L.M."/>
            <person name="DeBoy R.T."/>
            <person name="Parker C.T."/>
            <person name="Daugherty S.C."/>
            <person name="Dodson R.J."/>
            <person name="Durkin A.S."/>
            <person name="Madupu R."/>
            <person name="Sullivan S.A."/>
            <person name="Shetty J.U."/>
            <person name="Ayodeji M.A."/>
            <person name="Shvartsbeyn A."/>
            <person name="Schatz M.C."/>
            <person name="Badger J.H."/>
            <person name="Fraser C.M."/>
            <person name="Nelson K.E."/>
        </authorList>
    </citation>
    <scope>NUCLEOTIDE SEQUENCE [LARGE SCALE GENOMIC DNA]</scope>
    <source>
        <strain>RM1221</strain>
    </source>
</reference>